<organism>
    <name type="scientific">Drosophila melanogaster</name>
    <name type="common">Fruit fly</name>
    <dbReference type="NCBI Taxonomy" id="7227"/>
    <lineage>
        <taxon>Eukaryota</taxon>
        <taxon>Metazoa</taxon>
        <taxon>Ecdysozoa</taxon>
        <taxon>Arthropoda</taxon>
        <taxon>Hexapoda</taxon>
        <taxon>Insecta</taxon>
        <taxon>Pterygota</taxon>
        <taxon>Neoptera</taxon>
        <taxon>Endopterygota</taxon>
        <taxon>Diptera</taxon>
        <taxon>Brachycera</taxon>
        <taxon>Muscomorpha</taxon>
        <taxon>Ephydroidea</taxon>
        <taxon>Drosophilidae</taxon>
        <taxon>Drosophila</taxon>
        <taxon>Sophophora</taxon>
    </lineage>
</organism>
<gene>
    <name evidence="21" type="primary">Klp61F</name>
    <name type="synonym">KLP2</name>
    <name evidence="21" type="ORF">CG9191</name>
</gene>
<comment type="function">
    <text evidence="5 8 9 11 13 15 16 17">Important role in mitotic dividing cells (PubMed:8227131). Microtubule motor required for spindle body separation (PubMed:8918872). Slow plus-end directed microtubule motor capable of cross-linking and sliding apart antiparallel microtubules, thereby pushing apart the associated spindle poles during spindle assembly and function (PubMed:19062285, PubMed:8589456, PubMed:8918872). Forms cross-links between microtubules within interpolar microtubule bundles (PubMed:19158379, PubMed:9885249). Contributes to the length of the metaphase spindle, maintains the prometaphase spindle by antagonizing Ncd, drives anaphase B, and also contributes to normal chromosome congression, kinetochore spacing, and anaphase A rates (PubMed:19158379). Displays microtubule-stimulated ATPase activity (PubMed:8589456). Required for normal fusome organization (PubMed:10469596). Required in non-mitotic cells for transport of secretory proteins from the Golgi complex to the cell surface (PubMed:23857769).</text>
</comment>
<comment type="subunit">
    <text evidence="10 12 14 17">Homotetramer (PubMed:24714498, PubMed:8538794, PubMed:9885249). Consists of two pairs of polypeptides associated by coiled-coil interactions to form two homodimers (PubMed:8538794). The homodimers are linked by lateral interactions between their coiled-coil regions to form a bipolar homotetramer consisting of a central rod with two motor domains projecting from either end (PubMed:8538794). Parallel coiled coils extend from each pair of motor heads, switch to two antiparallel coiled coils in the central region and then back to parallel coiled coils (PubMed:24714498). Interacts with Wee1 (PubMed:19800237).</text>
</comment>
<comment type="subcellular location">
    <subcellularLocation>
        <location evidence="5 10 15 17">Cytoplasm</location>
        <location evidence="5 10 15 17">Cytoskeleton</location>
        <location evidence="5 10 15 17">Spindle</location>
    </subcellularLocation>
    <subcellularLocation>
        <location evidence="15">Cytoplasm</location>
        <location evidence="15">Cytoskeleton</location>
        <location evidence="15">Spindle pole</location>
    </subcellularLocation>
    <subcellularLocation>
        <location evidence="5 17">Cytoplasm</location>
    </subcellularLocation>
    <text evidence="5 15">In somatic cells, cytoplasmic during interphase, localized to centrosomal asters at the onset of mitosis in prophase and associated with spindle structures during the remainder of mitosis (PubMed:10469596). In male and female germ cells, associates with fusomes during interphase, then localizes to centrosomal asters during prophase and to spindles in metaphase (PubMed:10469596). Coincident with spindle microtubules from prophase to metaphase and, as mitosis proceeds, found both at the spindle poles and along the spindle fibers (PubMed:8589456).</text>
</comment>
<comment type="developmental stage">
    <text evidence="13">Specifically expressed in proliferating tissues during embryonic and larval development.</text>
</comment>
<comment type="PTM">
    <text evidence="1 10 17">Phosphorylation is required for localization to mitotic spindles (PubMed:9885249). Phosphorylation of Thr-933 during mitosis controls association with the spindle apparatus (By similarity). Phosphorylated in vitro by Wee1 (PubMed:19800237).</text>
</comment>
<comment type="similarity">
    <text evidence="3">Belongs to the TRAFAC class myosin-kinesin ATPase superfamily. Kinesin family. BimC subfamily.</text>
</comment>
<sequence length="1066" mass="121163">MDISGGNTSRQPQKKSNQNIQVYVRVRPLNSRERCIRSAEVVDVVGPREVVTRHTLDSKLTKKFTFDRSFGPESKQCDVYSVVVSPLIEEVLNGYNCTVFAYGQTGTGKTHTMVGNETAELKSSWEDDSDIGIIPRALSHLFDELRMMEVEYTMRISYLELYNEELCDLLSTDDTTKIRIFDDSTKKGSVIIQGLEEIPVHSKDDVYKLLEKGKERRKTATTLMNAQSSRSHTVFSIVVHIRENGIEGEDMLKIGKLNLVDLAGSENVSKAGNEKGIRVRETVNINQSLLTLGRVITALVDRAPHVPYRESKLTRLLQESLGGRTKTSIIATISPGHKDIEETLSTLEYAHRAKNIQNKPEVNQKLTKKTVLKEYTEEIDKLKRDLMAARDKNGIYLAEETYGEITLKLESQNRELNEKMLLLKALKDELQNKEKIFSEVSMSLVEKTQELKKTEENLLNTKGTLLLTKKVLTKTKRRYKEKKELVASHMKTEQVLTTQAQEILAAADLATDDTHQLHGTIERRRELDEKIRRSCDQFKDRMQDNLEMIGGSLNLYQDQQAALKEQLSQEMVNSSYVSQRLALNSSKSIEMLKEMCAQSLQDQTNLHNKLIGEVMKISDQHSQAFVAKLMEQMQQQQLLMSKEIQTNLQVIEENNQRHKAMLDSMQEKFATIIDSSLQSVEEHAKQMHKKLEQLGAMSLPDAEELQNLQEELANERALAQQEDALLESMMMQMEQIKNLRSKNSISMSVHLNKMEESRLTRNHRIDDIKSGIQDYQKLGIEASQSAQAELTSQMEAGMLCLDQGVANCSMLQVHMKNLNQKYEKETNENVGSVRVHHNQVEIICQESKQQLEAVQEKTEVNLEQMVDARQQLITEDRQRFIGHATVATDLVQESNRQFSEHAEHQRQQLQICEQELVRFQQSELKTYAPTGTTPSKRDFVYPRTLVATSPHQEIVRRYRQELDWSDLDTTATIDECSEGEHDVSMHSVQELSETETIMNSTPIEPVDGVTVKRGCGTTRNSNSNALKPPVATGGKRSSSLSRSLTPSKTSPRGSPAFVRHNKENVA</sequence>
<protein>
    <recommendedName>
        <fullName evidence="18">Kinesin-like protein Klp61F</fullName>
    </recommendedName>
    <alternativeName>
        <fullName evidence="19">Bipolar kinesin KRP-130</fullName>
    </alternativeName>
</protein>
<keyword id="KW-0002">3D-structure</keyword>
<keyword id="KW-0067">ATP-binding</keyword>
<keyword id="KW-0131">Cell cycle</keyword>
<keyword id="KW-0132">Cell division</keyword>
<keyword id="KW-0175">Coiled coil</keyword>
<keyword id="KW-0963">Cytoplasm</keyword>
<keyword id="KW-0206">Cytoskeleton</keyword>
<keyword id="KW-0903">Direct protein sequencing</keyword>
<keyword id="KW-0493">Microtubule</keyword>
<keyword id="KW-0498">Mitosis</keyword>
<keyword id="KW-0505">Motor protein</keyword>
<keyword id="KW-0547">Nucleotide-binding</keyword>
<keyword id="KW-0597">Phosphoprotein</keyword>
<keyword id="KW-1185">Reference proteome</keyword>
<reference key="1">
    <citation type="journal article" date="1993" name="J. Cell Biol.">
        <title>The kinesin-like protein KLP61F is essential for mitosis in Drosophila.</title>
        <authorList>
            <person name="Heck M.M.S."/>
            <person name="Pereira A."/>
            <person name="Pesavento P.A."/>
            <person name="Yannoni Y."/>
            <person name="Spradling A.C."/>
            <person name="Goldstein L.S.B."/>
        </authorList>
    </citation>
    <scope>NUCLEOTIDE SEQUENCE [MRNA]</scope>
    <scope>FUNCTION</scope>
    <scope>DEVELOPMENTAL STAGE</scope>
    <source>
        <tissue>Embryo</tissue>
    </source>
</reference>
<reference key="2">
    <citation type="journal article" date="2000" name="Science">
        <title>The genome sequence of Drosophila melanogaster.</title>
        <authorList>
            <person name="Adams M.D."/>
            <person name="Celniker S.E."/>
            <person name="Holt R.A."/>
            <person name="Evans C.A."/>
            <person name="Gocayne J.D."/>
            <person name="Amanatides P.G."/>
            <person name="Scherer S.E."/>
            <person name="Li P.W."/>
            <person name="Hoskins R.A."/>
            <person name="Galle R.F."/>
            <person name="George R.A."/>
            <person name="Lewis S.E."/>
            <person name="Richards S."/>
            <person name="Ashburner M."/>
            <person name="Henderson S.N."/>
            <person name="Sutton G.G."/>
            <person name="Wortman J.R."/>
            <person name="Yandell M.D."/>
            <person name="Zhang Q."/>
            <person name="Chen L.X."/>
            <person name="Brandon R.C."/>
            <person name="Rogers Y.-H.C."/>
            <person name="Blazej R.G."/>
            <person name="Champe M."/>
            <person name="Pfeiffer B.D."/>
            <person name="Wan K.H."/>
            <person name="Doyle C."/>
            <person name="Baxter E.G."/>
            <person name="Helt G."/>
            <person name="Nelson C.R."/>
            <person name="Miklos G.L.G."/>
            <person name="Abril J.F."/>
            <person name="Agbayani A."/>
            <person name="An H.-J."/>
            <person name="Andrews-Pfannkoch C."/>
            <person name="Baldwin D."/>
            <person name="Ballew R.M."/>
            <person name="Basu A."/>
            <person name="Baxendale J."/>
            <person name="Bayraktaroglu L."/>
            <person name="Beasley E.M."/>
            <person name="Beeson K.Y."/>
            <person name="Benos P.V."/>
            <person name="Berman B.P."/>
            <person name="Bhandari D."/>
            <person name="Bolshakov S."/>
            <person name="Borkova D."/>
            <person name="Botchan M.R."/>
            <person name="Bouck J."/>
            <person name="Brokstein P."/>
            <person name="Brottier P."/>
            <person name="Burtis K.C."/>
            <person name="Busam D.A."/>
            <person name="Butler H."/>
            <person name="Cadieu E."/>
            <person name="Center A."/>
            <person name="Chandra I."/>
            <person name="Cherry J.M."/>
            <person name="Cawley S."/>
            <person name="Dahlke C."/>
            <person name="Davenport L.B."/>
            <person name="Davies P."/>
            <person name="de Pablos B."/>
            <person name="Delcher A."/>
            <person name="Deng Z."/>
            <person name="Mays A.D."/>
            <person name="Dew I."/>
            <person name="Dietz S.M."/>
            <person name="Dodson K."/>
            <person name="Doup L.E."/>
            <person name="Downes M."/>
            <person name="Dugan-Rocha S."/>
            <person name="Dunkov B.C."/>
            <person name="Dunn P."/>
            <person name="Durbin K.J."/>
            <person name="Evangelista C.C."/>
            <person name="Ferraz C."/>
            <person name="Ferriera S."/>
            <person name="Fleischmann W."/>
            <person name="Fosler C."/>
            <person name="Gabrielian A.E."/>
            <person name="Garg N.S."/>
            <person name="Gelbart W.M."/>
            <person name="Glasser K."/>
            <person name="Glodek A."/>
            <person name="Gong F."/>
            <person name="Gorrell J.H."/>
            <person name="Gu Z."/>
            <person name="Guan P."/>
            <person name="Harris M."/>
            <person name="Harris N.L."/>
            <person name="Harvey D.A."/>
            <person name="Heiman T.J."/>
            <person name="Hernandez J.R."/>
            <person name="Houck J."/>
            <person name="Hostin D."/>
            <person name="Houston K.A."/>
            <person name="Howland T.J."/>
            <person name="Wei M.-H."/>
            <person name="Ibegwam C."/>
            <person name="Jalali M."/>
            <person name="Kalush F."/>
            <person name="Karpen G.H."/>
            <person name="Ke Z."/>
            <person name="Kennison J.A."/>
            <person name="Ketchum K.A."/>
            <person name="Kimmel B.E."/>
            <person name="Kodira C.D."/>
            <person name="Kraft C.L."/>
            <person name="Kravitz S."/>
            <person name="Kulp D."/>
            <person name="Lai Z."/>
            <person name="Lasko P."/>
            <person name="Lei Y."/>
            <person name="Levitsky A.A."/>
            <person name="Li J.H."/>
            <person name="Li Z."/>
            <person name="Liang Y."/>
            <person name="Lin X."/>
            <person name="Liu X."/>
            <person name="Mattei B."/>
            <person name="McIntosh T.C."/>
            <person name="McLeod M.P."/>
            <person name="McPherson D."/>
            <person name="Merkulov G."/>
            <person name="Milshina N.V."/>
            <person name="Mobarry C."/>
            <person name="Morris J."/>
            <person name="Moshrefi A."/>
            <person name="Mount S.M."/>
            <person name="Moy M."/>
            <person name="Murphy B."/>
            <person name="Murphy L."/>
            <person name="Muzny D.M."/>
            <person name="Nelson D.L."/>
            <person name="Nelson D.R."/>
            <person name="Nelson K.A."/>
            <person name="Nixon K."/>
            <person name="Nusskern D.R."/>
            <person name="Pacleb J.M."/>
            <person name="Palazzolo M."/>
            <person name="Pittman G.S."/>
            <person name="Pan S."/>
            <person name="Pollard J."/>
            <person name="Puri V."/>
            <person name="Reese M.G."/>
            <person name="Reinert K."/>
            <person name="Remington K."/>
            <person name="Saunders R.D.C."/>
            <person name="Scheeler F."/>
            <person name="Shen H."/>
            <person name="Shue B.C."/>
            <person name="Siden-Kiamos I."/>
            <person name="Simpson M."/>
            <person name="Skupski M.P."/>
            <person name="Smith T.J."/>
            <person name="Spier E."/>
            <person name="Spradling A.C."/>
            <person name="Stapleton M."/>
            <person name="Strong R."/>
            <person name="Sun E."/>
            <person name="Svirskas R."/>
            <person name="Tector C."/>
            <person name="Turner R."/>
            <person name="Venter E."/>
            <person name="Wang A.H."/>
            <person name="Wang X."/>
            <person name="Wang Z.-Y."/>
            <person name="Wassarman D.A."/>
            <person name="Weinstock G.M."/>
            <person name="Weissenbach J."/>
            <person name="Williams S.M."/>
            <person name="Woodage T."/>
            <person name="Worley K.C."/>
            <person name="Wu D."/>
            <person name="Yang S."/>
            <person name="Yao Q.A."/>
            <person name="Ye J."/>
            <person name="Yeh R.-F."/>
            <person name="Zaveri J.S."/>
            <person name="Zhan M."/>
            <person name="Zhang G."/>
            <person name="Zhao Q."/>
            <person name="Zheng L."/>
            <person name="Zheng X.H."/>
            <person name="Zhong F.N."/>
            <person name="Zhong W."/>
            <person name="Zhou X."/>
            <person name="Zhu S.C."/>
            <person name="Zhu X."/>
            <person name="Smith H.O."/>
            <person name="Gibbs R.A."/>
            <person name="Myers E.W."/>
            <person name="Rubin G.M."/>
            <person name="Venter J.C."/>
        </authorList>
    </citation>
    <scope>NUCLEOTIDE SEQUENCE [LARGE SCALE GENOMIC DNA]</scope>
    <source>
        <strain>Berkeley</strain>
    </source>
</reference>
<reference key="3">
    <citation type="journal article" date="2002" name="Genome Biol.">
        <title>Annotation of the Drosophila melanogaster euchromatic genome: a systematic review.</title>
        <authorList>
            <person name="Misra S."/>
            <person name="Crosby M.A."/>
            <person name="Mungall C.J."/>
            <person name="Matthews B.B."/>
            <person name="Campbell K.S."/>
            <person name="Hradecky P."/>
            <person name="Huang Y."/>
            <person name="Kaminker J.S."/>
            <person name="Millburn G.H."/>
            <person name="Prochnik S.E."/>
            <person name="Smith C.D."/>
            <person name="Tupy J.L."/>
            <person name="Whitfield E.J."/>
            <person name="Bayraktaroglu L."/>
            <person name="Berman B.P."/>
            <person name="Bettencourt B.R."/>
            <person name="Celniker S.E."/>
            <person name="de Grey A.D.N.J."/>
            <person name="Drysdale R.A."/>
            <person name="Harris N.L."/>
            <person name="Richter J."/>
            <person name="Russo S."/>
            <person name="Schroeder A.J."/>
            <person name="Shu S.Q."/>
            <person name="Stapleton M."/>
            <person name="Yamada C."/>
            <person name="Ashburner M."/>
            <person name="Gelbart W.M."/>
            <person name="Rubin G.M."/>
            <person name="Lewis S.E."/>
        </authorList>
    </citation>
    <scope>GENOME REANNOTATION</scope>
    <source>
        <strain>Berkeley</strain>
    </source>
</reference>
<reference key="4">
    <citation type="journal article" date="2002" name="Genome Biol.">
        <title>A Drosophila full-length cDNA resource.</title>
        <authorList>
            <person name="Stapleton M."/>
            <person name="Carlson J.W."/>
            <person name="Brokstein P."/>
            <person name="Yu C."/>
            <person name="Champe M."/>
            <person name="George R.A."/>
            <person name="Guarin H."/>
            <person name="Kronmiller B."/>
            <person name="Pacleb J.M."/>
            <person name="Park S."/>
            <person name="Wan K.H."/>
            <person name="Rubin G.M."/>
            <person name="Celniker S.E."/>
        </authorList>
    </citation>
    <scope>NUCLEOTIDE SEQUENCE [LARGE SCALE MRNA]</scope>
    <source>
        <strain>Berkeley</strain>
        <tissue>Embryo</tissue>
    </source>
</reference>
<reference key="5">
    <citation type="journal article" date="1991" name="Proc. Natl. Acad. Sci. U.S.A.">
        <title>Identification and partial characterization of six members of the kinesin superfamily in Drosophila.</title>
        <authorList>
            <person name="Stewart R.J."/>
            <person name="Pesavento P.A."/>
            <person name="Woerpel D.N."/>
            <person name="Goldstein L.S.B."/>
        </authorList>
    </citation>
    <scope>NUCLEOTIDE SEQUENCE [GENOMIC DNA] OF 228-357</scope>
    <source>
        <strain>DP CN BW</strain>
    </source>
</reference>
<reference key="6">
    <citation type="journal article" date="1996" name="Nature">
        <title>An essential bipolar mitotic motor.</title>
        <authorList>
            <person name="Kashina A.S."/>
            <person name="Scholey J.M."/>
            <person name="Leszyk J.D."/>
            <person name="Saxton W.M."/>
        </authorList>
    </citation>
    <scope>PARTIAL PROTEIN SEQUENCE</scope>
    <scope>IDENTIFICATION AS KRP-130</scope>
    <scope>FUNCTION</scope>
</reference>
<reference key="7">
    <citation type="journal article" date="1995" name="Mol. Biol. Cell">
        <title>Motor activity and mitotic spindle localization of the Drosophila kinesin-like protein KLP61F.</title>
        <authorList>
            <person name="Barton N.R."/>
            <person name="Pereira A.J."/>
            <person name="Goldstein L.S."/>
        </authorList>
    </citation>
    <scope>FUNCTION</scope>
    <scope>SUBCELLULAR LOCATION</scope>
</reference>
<reference key="8">
    <citation type="journal article" date="1996" name="Nature">
        <title>A bipolar kinesin.</title>
        <authorList>
            <person name="Kashina A.S."/>
            <person name="Baskin R.J."/>
            <person name="Cole D.G."/>
            <person name="Wedaman K.P."/>
            <person name="Saxton W.M."/>
            <person name="Scholey J.M."/>
        </authorList>
    </citation>
    <scope>SUBUNIT</scope>
</reference>
<reference key="9">
    <citation type="journal article" date="1999" name="Curr. Biol.">
        <title>BimC motor protein KLP61F cycles between mitotic spindles and fusomes in Drosophila germ cells.</title>
        <authorList>
            <person name="Wilson P.G."/>
        </authorList>
    </citation>
    <scope>FUNCTION</scope>
    <scope>SUBCELLULAR LOCATION</scope>
</reference>
<reference key="10">
    <citation type="journal article" date="1999" name="J. Cell Biol.">
        <title>The bipolar kinesin, KLP61F, cross-links microtubules within interpolar microtubule bundles of Drosophila embryonic mitotic spindles.</title>
        <authorList>
            <person name="Sharp D.J."/>
            <person name="McDonald K.L."/>
            <person name="Brown H.M."/>
            <person name="Matthies H.J."/>
            <person name="Walczak C."/>
            <person name="Vale R.D."/>
            <person name="Mitchison T.J."/>
            <person name="Scholey J.M."/>
        </authorList>
    </citation>
    <scope>FUNCTION</scope>
    <scope>SUBUNIT</scope>
    <scope>SUBCELLULAR LOCATION</scope>
    <scope>PHOSPHORYLATION</scope>
</reference>
<reference key="11">
    <citation type="journal article" date="2007" name="Mol. Biosyst.">
        <title>An integrated chemical, mass spectrometric and computational strategy for (quantitative) phosphoproteomics: application to Drosophila melanogaster Kc167 cells.</title>
        <authorList>
            <person name="Bodenmiller B."/>
            <person name="Mueller L.N."/>
            <person name="Pedrioli P.G.A."/>
            <person name="Pflieger D."/>
            <person name="Juenger M.A."/>
            <person name="Eng J.K."/>
            <person name="Aebersold R."/>
            <person name="Tao W.A."/>
        </authorList>
    </citation>
    <scope>PHOSPHORYLATION [LARGE SCALE ANALYSIS] AT THR-520 AND SER-949</scope>
    <scope>IDENTIFICATION BY MASS SPECTROMETRY</scope>
</reference>
<reference key="12">
    <citation type="journal article" date="2008" name="Curr. Biol.">
        <title>The homotetrameric kinesin-5 KLP61F preferentially crosslinks microtubules into antiparallel orientations.</title>
        <authorList>
            <person name="van den Wildenberg S.M."/>
            <person name="Tao L."/>
            <person name="Kapitein L.C."/>
            <person name="Schmidt C.F."/>
            <person name="Scholey J.M."/>
            <person name="Peterman E.J."/>
        </authorList>
    </citation>
    <scope>FUNCTION</scope>
</reference>
<reference key="13">
    <citation type="journal article" date="2008" name="J. Proteome Res.">
        <title>Phosphoproteome analysis of Drosophila melanogaster embryos.</title>
        <authorList>
            <person name="Zhai B."/>
            <person name="Villen J."/>
            <person name="Beausoleil S.A."/>
            <person name="Mintseris J."/>
            <person name="Gygi S.P."/>
        </authorList>
    </citation>
    <scope>PHOSPHORYLATION [LARGE SCALE ANALYSIS] AT THR-933; SER-949; SER-1043; THR-1045; SER-1050 AND SER-1054</scope>
    <scope>IDENTIFICATION BY MASS SPECTROMETRY</scope>
    <source>
        <tissue>Embryo</tissue>
    </source>
</reference>
<reference key="14">
    <citation type="journal article" date="2009" name="Curr. Biol.">
        <title>Tyrosines in the kinesin-5 head domain are necessary for phosphorylation by Wee1 and for mitotic spindle integrity.</title>
        <authorList>
            <person name="Garcia K."/>
            <person name="Stumpff J."/>
            <person name="Duncan T."/>
            <person name="Su T.T."/>
        </authorList>
    </citation>
    <scope>SUBCELLULAR LOCATION</scope>
    <scope>INTERACTION WITH WEE1</scope>
    <scope>PHOSPHORYLATION</scope>
    <scope>MUTAGENESIS OF TYR-23; TYR-152 AND TYR-207</scope>
</reference>
<reference key="15">
    <citation type="journal article" date="2009" name="Mol. Biol. Cell">
        <title>Kinesin-5-dependent poleward flux and spindle length control in Drosophila embryo mitosis.</title>
        <authorList>
            <person name="Brust-Mascher I."/>
            <person name="Sommi P."/>
            <person name="Cheerambathur D.K."/>
            <person name="Scholey J.M."/>
        </authorList>
    </citation>
    <scope>FUNCTION</scope>
</reference>
<reference key="16">
    <citation type="journal article" date="2013" name="J. Cell Biol.">
        <title>Kinesin-5/Eg5 is important for transport of CARTS from the trans-Golgi network to the cell surface.</title>
        <authorList>
            <person name="Wakana Y."/>
            <person name="Villeneuve J."/>
            <person name="van Galen J."/>
            <person name="Cruz-Garcia D."/>
            <person name="Tagaya M."/>
            <person name="Malhotra V."/>
        </authorList>
    </citation>
    <scope>FUNCTION</scope>
</reference>
<reference key="17">
    <citation type="journal article" date="2009" name="J. Mol. Biol.">
        <title>9-Angstrom structure of a microtubule-bound mitotic motor.</title>
        <authorList>
            <person name="Bodey A.J."/>
            <person name="Kikkawa M."/>
            <person name="Moores C.A."/>
        </authorList>
    </citation>
    <scope>STRUCTURE BY ELECTRON MICROSCOPY (9.4 ANGSTROMS) OF 1-368</scope>
    <scope>INTERACTION WITH MICROTUBULES</scope>
</reference>
<reference key="18">
    <citation type="journal article" date="2014" name="Elife">
        <title>Structural basis for the assembly of the mitotic motor Kinesin-5 into bipolar tetramers.</title>
        <authorList>
            <person name="Scholey J.E."/>
            <person name="Nithianantham S."/>
            <person name="Scholey J.M."/>
            <person name="Al-Bassam J."/>
        </authorList>
    </citation>
    <scope>X-RAY CRYSTALLOGRAPHY (2.6 ANGSTROMS) OF 634-837</scope>
    <scope>SUBUNIT</scope>
    <scope>MUTAGENESIS OF PHE-669; LEU-726; 729-MET-MET-730; ARG-740; ARG-761 AND TYR-775</scope>
</reference>
<proteinExistence type="evidence at protein level"/>
<feature type="chain" id="PRO_0000125371" description="Kinesin-like protein Klp61F">
    <location>
        <begin position="1"/>
        <end position="1066"/>
    </location>
</feature>
<feature type="domain" description="Kinesin motor" evidence="3">
    <location>
        <begin position="19"/>
        <end position="356"/>
    </location>
</feature>
<feature type="region of interest" description="Disordered" evidence="4">
    <location>
        <begin position="990"/>
        <end position="1009"/>
    </location>
</feature>
<feature type="region of interest" description="Disordered" evidence="4">
    <location>
        <begin position="1016"/>
        <end position="1066"/>
    </location>
</feature>
<feature type="coiled-coil region" evidence="2">
    <location>
        <begin position="362"/>
        <end position="462"/>
    </location>
</feature>
<feature type="coiled-coil region" evidence="2">
    <location>
        <begin position="540"/>
        <end position="569"/>
    </location>
</feature>
<feature type="coiled-coil region" evidence="2">
    <location>
        <begin position="639"/>
        <end position="738"/>
    </location>
</feature>
<feature type="coiled-coil region" evidence="2">
    <location>
        <begin position="808"/>
        <end position="875"/>
    </location>
</feature>
<feature type="coiled-coil region" evidence="2">
    <location>
        <begin position="889"/>
        <end position="918"/>
    </location>
</feature>
<feature type="compositionally biased region" description="Polar residues" evidence="4">
    <location>
        <begin position="990"/>
        <end position="1002"/>
    </location>
</feature>
<feature type="compositionally biased region" description="Low complexity" evidence="4">
    <location>
        <begin position="1033"/>
        <end position="1051"/>
    </location>
</feature>
<feature type="binding site" evidence="3">
    <location>
        <begin position="103"/>
        <end position="110"/>
    </location>
    <ligand>
        <name>ATP</name>
        <dbReference type="ChEBI" id="CHEBI:30616"/>
    </ligand>
</feature>
<feature type="modified residue" description="Phosphothreonine" evidence="6">
    <location>
        <position position="520"/>
    </location>
</feature>
<feature type="modified residue" description="Phosphothreonine" evidence="7">
    <location>
        <position position="933"/>
    </location>
</feature>
<feature type="modified residue" description="Phosphoserine" evidence="6 7">
    <location>
        <position position="949"/>
    </location>
</feature>
<feature type="modified residue" description="Phosphoserine" evidence="7">
    <location>
        <position position="1043"/>
    </location>
</feature>
<feature type="modified residue" description="Phosphothreonine" evidence="7">
    <location>
        <position position="1045"/>
    </location>
</feature>
<feature type="modified residue" description="Phosphoserine" evidence="7">
    <location>
        <position position="1050"/>
    </location>
</feature>
<feature type="modified residue" description="Phosphoserine" evidence="7">
    <location>
        <position position="1054"/>
    </location>
</feature>
<feature type="mutagenesis site" description="Spindle defects and greatly reduced phosphorylation by Wee1 in vitro; when associated with F-152 and F-207." evidence="10">
    <original>Y</original>
    <variation>F</variation>
    <location>
        <position position="23"/>
    </location>
</feature>
<feature type="mutagenesis site" description="Spindle defects and greatly reduced phosphorylation by Wee1 in vitro; when associated with F-23 and F-207." evidence="10">
    <original>Y</original>
    <variation>F</variation>
    <location>
        <position position="152"/>
    </location>
</feature>
<feature type="mutagenesis site" description="Spindle defects and greatly reduced phosphorylation by Wee1 in vitro; when associated with F-23 and F-152." evidence="10">
    <original>Y</original>
    <variation>F</variation>
    <location>
        <position position="207"/>
    </location>
</feature>
<feature type="mutagenesis site" description="Remains tetrameric." evidence="12">
    <original>F</original>
    <variation>E</variation>
    <location>
        <position position="669"/>
    </location>
</feature>
<feature type="mutagenesis site" description="Mainly tetrameric. Mainly dimeric; when associated with R-775." evidence="12">
    <original>L</original>
    <variation>D</variation>
    <location>
        <position position="726"/>
    </location>
</feature>
<feature type="mutagenesis site" description="Mainly tetrameric." evidence="12">
    <original>L</original>
    <variation>K</variation>
    <location>
        <position position="726"/>
    </location>
</feature>
<feature type="mutagenesis site" description="Mainly monomeric." evidence="12">
    <original>MM</original>
    <variation>EE</variation>
    <location>
        <begin position="729"/>
        <end position="730"/>
    </location>
</feature>
<feature type="mutagenesis site" description="Formation of tetramers, dimers and monomers." evidence="12">
    <original>R</original>
    <variation>A</variation>
    <location>
        <position position="740"/>
    </location>
</feature>
<feature type="mutagenesis site" description="Formation of tetramers and dimers." evidence="12">
    <original>R</original>
    <variation>A</variation>
    <location>
        <position position="761"/>
    </location>
</feature>
<feature type="mutagenesis site" description="Mainly tetrameric with formation of some monomers. Mainly dimeric; when associated with D-726." evidence="12">
    <original>Y</original>
    <variation>R</variation>
    <location>
        <position position="775"/>
    </location>
</feature>
<feature type="sequence conflict" description="In Ref. 1; AAA03718." evidence="20" ref="1">
    <original>L</original>
    <variation>Q</variation>
    <location>
        <position position="962"/>
    </location>
</feature>
<feature type="sequence conflict" description="In Ref. 1; AAA03718." evidence="20" ref="1">
    <original>V</original>
    <variation>D</variation>
    <location>
        <position position="983"/>
    </location>
</feature>
<feature type="strand" evidence="23">
    <location>
        <begin position="21"/>
        <end position="26"/>
    </location>
</feature>
<feature type="helix" evidence="23">
    <location>
        <begin position="31"/>
        <end position="35"/>
    </location>
</feature>
<feature type="strand" evidence="23">
    <location>
        <begin position="42"/>
        <end position="45"/>
    </location>
</feature>
<feature type="turn" evidence="23">
    <location>
        <begin position="46"/>
        <end position="48"/>
    </location>
</feature>
<feature type="strand" evidence="23">
    <location>
        <begin position="49"/>
        <end position="53"/>
    </location>
</feature>
<feature type="turn" evidence="23">
    <location>
        <begin position="55"/>
        <end position="57"/>
    </location>
</feature>
<feature type="strand" evidence="23">
    <location>
        <begin position="60"/>
        <end position="65"/>
    </location>
</feature>
<feature type="strand" evidence="23">
    <location>
        <begin position="67"/>
        <end position="70"/>
    </location>
</feature>
<feature type="helix" evidence="23">
    <location>
        <begin position="76"/>
        <end position="83"/>
    </location>
</feature>
<feature type="helix" evidence="23">
    <location>
        <begin position="85"/>
        <end position="92"/>
    </location>
</feature>
<feature type="strand" evidence="23">
    <location>
        <begin position="96"/>
        <end position="104"/>
    </location>
</feature>
<feature type="helix" evidence="23">
    <location>
        <begin position="109"/>
        <end position="113"/>
    </location>
</feature>
<feature type="helix" evidence="23">
    <location>
        <begin position="133"/>
        <end position="147"/>
    </location>
</feature>
<feature type="strand" evidence="23">
    <location>
        <begin position="149"/>
        <end position="162"/>
    </location>
</feature>
<feature type="strand" evidence="23">
    <location>
        <begin position="165"/>
        <end position="168"/>
    </location>
</feature>
<feature type="strand" evidence="23">
    <location>
        <begin position="172"/>
        <end position="174"/>
    </location>
</feature>
<feature type="strand" evidence="23">
    <location>
        <begin position="179"/>
        <end position="182"/>
    </location>
</feature>
<feature type="strand" evidence="23">
    <location>
        <begin position="190"/>
        <end position="193"/>
    </location>
</feature>
<feature type="strand" evidence="23">
    <location>
        <begin position="198"/>
        <end position="200"/>
    </location>
</feature>
<feature type="helix" evidence="23">
    <location>
        <begin position="203"/>
        <end position="216"/>
    </location>
</feature>
<feature type="strand" evidence="23">
    <location>
        <begin position="219"/>
        <end position="222"/>
    </location>
</feature>
<feature type="strand" evidence="23">
    <location>
        <begin position="225"/>
        <end position="229"/>
    </location>
</feature>
<feature type="strand" evidence="23">
    <location>
        <begin position="231"/>
        <end position="243"/>
    </location>
</feature>
<feature type="strand" evidence="23">
    <location>
        <begin position="252"/>
        <end position="261"/>
    </location>
</feature>
<feature type="helix" evidence="23">
    <location>
        <begin position="277"/>
        <end position="301"/>
    </location>
</feature>
<feature type="helix" evidence="23">
    <location>
        <begin position="308"/>
        <end position="310"/>
    </location>
</feature>
<feature type="helix" evidence="23">
    <location>
        <begin position="312"/>
        <end position="317"/>
    </location>
</feature>
<feature type="helix" evidence="23">
    <location>
        <begin position="318"/>
        <end position="320"/>
    </location>
</feature>
<feature type="strand" evidence="23">
    <location>
        <begin position="323"/>
        <end position="333"/>
    </location>
</feature>
<feature type="helix" evidence="23">
    <location>
        <begin position="337"/>
        <end position="339"/>
    </location>
</feature>
<feature type="helix" evidence="23">
    <location>
        <begin position="340"/>
        <end position="353"/>
    </location>
</feature>
<feature type="helix" evidence="22">
    <location>
        <begin position="641"/>
        <end position="695"/>
    </location>
</feature>
<feature type="helix" evidence="22">
    <location>
        <begin position="698"/>
        <end position="790"/>
    </location>
</feature>
<feature type="helix" evidence="22">
    <location>
        <begin position="792"/>
        <end position="794"/>
    </location>
</feature>
<accession>P46863</accession>
<accession>Q8T0A6</accession>
<accession>Q9W0I8</accession>
<evidence type="ECO:0000250" key="1">
    <source>
        <dbReference type="UniProtKB" id="P52732"/>
    </source>
</evidence>
<evidence type="ECO:0000255" key="2"/>
<evidence type="ECO:0000255" key="3">
    <source>
        <dbReference type="PROSITE-ProRule" id="PRU00283"/>
    </source>
</evidence>
<evidence type="ECO:0000256" key="4">
    <source>
        <dbReference type="SAM" id="MobiDB-lite"/>
    </source>
</evidence>
<evidence type="ECO:0000269" key="5">
    <source>
    </source>
</evidence>
<evidence type="ECO:0000269" key="6">
    <source>
    </source>
</evidence>
<evidence type="ECO:0000269" key="7">
    <source>
    </source>
</evidence>
<evidence type="ECO:0000269" key="8">
    <source>
    </source>
</evidence>
<evidence type="ECO:0000269" key="9">
    <source>
    </source>
</evidence>
<evidence type="ECO:0000269" key="10">
    <source>
    </source>
</evidence>
<evidence type="ECO:0000269" key="11">
    <source>
    </source>
</evidence>
<evidence type="ECO:0000269" key="12">
    <source>
    </source>
</evidence>
<evidence type="ECO:0000269" key="13">
    <source>
    </source>
</evidence>
<evidence type="ECO:0000269" key="14">
    <source>
    </source>
</evidence>
<evidence type="ECO:0000269" key="15">
    <source>
    </source>
</evidence>
<evidence type="ECO:0000269" key="16">
    <source>
    </source>
</evidence>
<evidence type="ECO:0000269" key="17">
    <source>
    </source>
</evidence>
<evidence type="ECO:0000303" key="18">
    <source>
    </source>
</evidence>
<evidence type="ECO:0000303" key="19">
    <source>
    </source>
</evidence>
<evidence type="ECO:0000305" key="20"/>
<evidence type="ECO:0000312" key="21">
    <source>
        <dbReference type="FlyBase" id="FBgn0004378"/>
    </source>
</evidence>
<evidence type="ECO:0007829" key="22">
    <source>
        <dbReference type="PDB" id="4PXU"/>
    </source>
</evidence>
<evidence type="ECO:0007829" key="23">
    <source>
        <dbReference type="PDB" id="7LXR"/>
    </source>
</evidence>
<name>KL61_DROME</name>
<dbReference type="EMBL" id="U01842">
    <property type="protein sequence ID" value="AAA03718.1"/>
    <property type="molecule type" value="mRNA"/>
</dbReference>
<dbReference type="EMBL" id="AE014296">
    <property type="protein sequence ID" value="AAF47458.2"/>
    <property type="molecule type" value="Genomic_DNA"/>
</dbReference>
<dbReference type="EMBL" id="AY069442">
    <property type="protein sequence ID" value="AAL39587.1"/>
    <property type="molecule type" value="mRNA"/>
</dbReference>
<dbReference type="EMBL" id="M74428">
    <property type="protein sequence ID" value="AAA28655.1"/>
    <property type="molecule type" value="Genomic_DNA"/>
</dbReference>
<dbReference type="PIR" id="A48669">
    <property type="entry name" value="A48669"/>
</dbReference>
<dbReference type="RefSeq" id="NP_476818.1">
    <property type="nucleotide sequence ID" value="NM_057470.5"/>
</dbReference>
<dbReference type="PDB" id="2WBE">
    <property type="method" value="EM"/>
    <property type="resolution" value="9.40 A"/>
    <property type="chains" value="C=1-368"/>
</dbReference>
<dbReference type="PDB" id="4PXT">
    <property type="method" value="X-ray"/>
    <property type="resolution" value="2.90 A"/>
    <property type="chains" value="A/B=634-837"/>
</dbReference>
<dbReference type="PDB" id="4PXU">
    <property type="method" value="X-ray"/>
    <property type="resolution" value="2.60 A"/>
    <property type="chains" value="A/B=634-837"/>
</dbReference>
<dbReference type="PDB" id="6VPO">
    <property type="method" value="EM"/>
    <property type="resolution" value="4.40 A"/>
    <property type="chains" value="C=1-369"/>
</dbReference>
<dbReference type="PDB" id="6VPP">
    <property type="method" value="EM"/>
    <property type="resolution" value="4.40 A"/>
    <property type="chains" value="C=1-369"/>
</dbReference>
<dbReference type="PDB" id="7LXR">
    <property type="method" value="X-ray"/>
    <property type="resolution" value="1.74 A"/>
    <property type="chains" value="A/B=1-367"/>
</dbReference>
<dbReference type="PDB" id="7S5U">
    <property type="method" value="X-ray"/>
    <property type="resolution" value="4.41 A"/>
    <property type="chains" value="A/B/C/D=597-835"/>
</dbReference>
<dbReference type="PDBsum" id="2WBE"/>
<dbReference type="PDBsum" id="4PXT"/>
<dbReference type="PDBsum" id="4PXU"/>
<dbReference type="PDBsum" id="6VPO"/>
<dbReference type="PDBsum" id="6VPP"/>
<dbReference type="PDBsum" id="7LXR"/>
<dbReference type="PDBsum" id="7S5U"/>
<dbReference type="EMDB" id="EMD-1604"/>
<dbReference type="EMDB" id="EMD-21314"/>
<dbReference type="EMDB" id="EMD-21315"/>
<dbReference type="SMR" id="P46863"/>
<dbReference type="BioGRID" id="63681">
    <property type="interactions" value="16"/>
</dbReference>
<dbReference type="DIP" id="DIP-22047N"/>
<dbReference type="FunCoup" id="P46863">
    <property type="interactions" value="672"/>
</dbReference>
<dbReference type="IntAct" id="P46863">
    <property type="interactions" value="22"/>
</dbReference>
<dbReference type="MINT" id="P46863"/>
<dbReference type="STRING" id="7227.FBpp0072616"/>
<dbReference type="ChEMBL" id="CHEMBL1795160"/>
<dbReference type="iPTMnet" id="P46863"/>
<dbReference type="PaxDb" id="7227-FBpp0072616"/>
<dbReference type="DNASU" id="38135"/>
<dbReference type="EnsemblMetazoa" id="FBtr0072733">
    <property type="protein sequence ID" value="FBpp0072616"/>
    <property type="gene ID" value="FBgn0004378"/>
</dbReference>
<dbReference type="GeneID" id="38135"/>
<dbReference type="KEGG" id="dme:Dmel_CG9191"/>
<dbReference type="AGR" id="FB:FBgn0004378"/>
<dbReference type="CTD" id="38135"/>
<dbReference type="FlyBase" id="FBgn0004378">
    <property type="gene designation" value="Klp61F"/>
</dbReference>
<dbReference type="VEuPathDB" id="VectorBase:FBgn0004378"/>
<dbReference type="eggNOG" id="KOG0243">
    <property type="taxonomic scope" value="Eukaryota"/>
</dbReference>
<dbReference type="GeneTree" id="ENSGT00940000155921"/>
<dbReference type="HOGENOM" id="CLU_001485_33_4_1"/>
<dbReference type="InParanoid" id="P46863"/>
<dbReference type="OMA" id="MEVEYTM"/>
<dbReference type="OrthoDB" id="3176171at2759"/>
<dbReference type="PhylomeDB" id="P46863"/>
<dbReference type="Reactome" id="R-DME-6811434">
    <property type="pathway name" value="COPI-dependent Golgi-to-ER retrograde traffic"/>
</dbReference>
<dbReference type="Reactome" id="R-DME-983189">
    <property type="pathway name" value="Kinesins"/>
</dbReference>
<dbReference type="SignaLink" id="P46863"/>
<dbReference type="BioGRID-ORCS" id="38135">
    <property type="hits" value="1 hit in 1 CRISPR screen"/>
</dbReference>
<dbReference type="EvolutionaryTrace" id="P46863"/>
<dbReference type="GenomeRNAi" id="38135"/>
<dbReference type="PRO" id="PR:P46863"/>
<dbReference type="Proteomes" id="UP000000803">
    <property type="component" value="Chromosome 3L"/>
</dbReference>
<dbReference type="Bgee" id="FBgn0004378">
    <property type="expression patterns" value="Expressed in eye disc (Drosophila) and 42 other cell types or tissues"/>
</dbReference>
<dbReference type="ExpressionAtlas" id="P46863">
    <property type="expression patterns" value="baseline and differential"/>
</dbReference>
<dbReference type="GO" id="GO:0005818">
    <property type="term" value="C:aster"/>
    <property type="evidence" value="ECO:0000314"/>
    <property type="project" value="UniProtKB"/>
</dbReference>
<dbReference type="GO" id="GO:0005737">
    <property type="term" value="C:cytoplasm"/>
    <property type="evidence" value="ECO:0000314"/>
    <property type="project" value="UniProtKB"/>
</dbReference>
<dbReference type="GO" id="GO:0005783">
    <property type="term" value="C:endoplasmic reticulum"/>
    <property type="evidence" value="ECO:0000314"/>
    <property type="project" value="FlyBase"/>
</dbReference>
<dbReference type="GO" id="GO:0045169">
    <property type="term" value="C:fusome"/>
    <property type="evidence" value="ECO:0000314"/>
    <property type="project" value="UniProtKB"/>
</dbReference>
<dbReference type="GO" id="GO:0005794">
    <property type="term" value="C:Golgi apparatus"/>
    <property type="evidence" value="ECO:0000314"/>
    <property type="project" value="FlyBase"/>
</dbReference>
<dbReference type="GO" id="GO:0005871">
    <property type="term" value="C:kinesin complex"/>
    <property type="evidence" value="ECO:0000314"/>
    <property type="project" value="FlyBase"/>
</dbReference>
<dbReference type="GO" id="GO:0005874">
    <property type="term" value="C:microtubule"/>
    <property type="evidence" value="ECO:0000314"/>
    <property type="project" value="FlyBase"/>
</dbReference>
<dbReference type="GO" id="GO:0005875">
    <property type="term" value="C:microtubule associated complex"/>
    <property type="evidence" value="ECO:0000314"/>
    <property type="project" value="FlyBase"/>
</dbReference>
<dbReference type="GO" id="GO:0072686">
    <property type="term" value="C:mitotic spindle"/>
    <property type="evidence" value="ECO:0000314"/>
    <property type="project" value="UniProtKB"/>
</dbReference>
<dbReference type="GO" id="GO:1990498">
    <property type="term" value="C:mitotic spindle microtubule"/>
    <property type="evidence" value="ECO:0000314"/>
    <property type="project" value="FlyBase"/>
</dbReference>
<dbReference type="GO" id="GO:0097431">
    <property type="term" value="C:mitotic spindle pole"/>
    <property type="evidence" value="ECO:0000314"/>
    <property type="project" value="UniProtKB"/>
</dbReference>
<dbReference type="GO" id="GO:0005634">
    <property type="term" value="C:nucleus"/>
    <property type="evidence" value="ECO:0000314"/>
    <property type="project" value="UniProtKB"/>
</dbReference>
<dbReference type="GO" id="GO:0005819">
    <property type="term" value="C:spindle"/>
    <property type="evidence" value="ECO:0000314"/>
    <property type="project" value="FlyBase"/>
</dbReference>
<dbReference type="GO" id="GO:0005876">
    <property type="term" value="C:spindle microtubule"/>
    <property type="evidence" value="ECO:0000318"/>
    <property type="project" value="GO_Central"/>
</dbReference>
<dbReference type="GO" id="GO:0005524">
    <property type="term" value="F:ATP binding"/>
    <property type="evidence" value="ECO:0007669"/>
    <property type="project" value="UniProtKB-KW"/>
</dbReference>
<dbReference type="GO" id="GO:0003774">
    <property type="term" value="F:cytoskeletal motor activity"/>
    <property type="evidence" value="ECO:0000314"/>
    <property type="project" value="FlyBase"/>
</dbReference>
<dbReference type="GO" id="GO:0008017">
    <property type="term" value="F:microtubule binding"/>
    <property type="evidence" value="ECO:0000314"/>
    <property type="project" value="UniProtKB"/>
</dbReference>
<dbReference type="GO" id="GO:0008574">
    <property type="term" value="F:plus-end-directed microtubule motor activity"/>
    <property type="evidence" value="ECO:0000314"/>
    <property type="project" value="UniProtKB"/>
</dbReference>
<dbReference type="GO" id="GO:0051301">
    <property type="term" value="P:cell division"/>
    <property type="evidence" value="ECO:0007669"/>
    <property type="project" value="UniProtKB-KW"/>
</dbReference>
<dbReference type="GO" id="GO:0051299">
    <property type="term" value="P:centrosome separation"/>
    <property type="evidence" value="ECO:0000315"/>
    <property type="project" value="FlyBase"/>
</dbReference>
<dbReference type="GO" id="GO:0045478">
    <property type="term" value="P:fusome organization"/>
    <property type="evidence" value="ECO:0000315"/>
    <property type="project" value="UniProtKB"/>
</dbReference>
<dbReference type="GO" id="GO:0007030">
    <property type="term" value="P:Golgi organization"/>
    <property type="evidence" value="ECO:0000315"/>
    <property type="project" value="FlyBase"/>
</dbReference>
<dbReference type="GO" id="GO:0001578">
    <property type="term" value="P:microtubule bundle formation"/>
    <property type="evidence" value="ECO:0000314"/>
    <property type="project" value="FlyBase"/>
</dbReference>
<dbReference type="GO" id="GO:0007018">
    <property type="term" value="P:microtubule-based movement"/>
    <property type="evidence" value="ECO:0000314"/>
    <property type="project" value="UniProtKB"/>
</dbReference>
<dbReference type="GO" id="GO:0000278">
    <property type="term" value="P:mitotic cell cycle"/>
    <property type="evidence" value="ECO:0007001"/>
    <property type="project" value="FlyBase"/>
</dbReference>
<dbReference type="GO" id="GO:0007100">
    <property type="term" value="P:mitotic centrosome separation"/>
    <property type="evidence" value="ECO:0000315"/>
    <property type="project" value="FlyBase"/>
</dbReference>
<dbReference type="GO" id="GO:0090307">
    <property type="term" value="P:mitotic spindle assembly"/>
    <property type="evidence" value="ECO:0000318"/>
    <property type="project" value="GO_Central"/>
</dbReference>
<dbReference type="GO" id="GO:0007052">
    <property type="term" value="P:mitotic spindle organization"/>
    <property type="evidence" value="ECO:0000315"/>
    <property type="project" value="FlyBase"/>
</dbReference>
<dbReference type="GO" id="GO:0031535">
    <property type="term" value="P:plus-end directed microtubule sliding"/>
    <property type="evidence" value="ECO:0000314"/>
    <property type="project" value="FlyBase"/>
</dbReference>
<dbReference type="GO" id="GO:0042998">
    <property type="term" value="P:positive regulation of Golgi to plasma membrane protein transport"/>
    <property type="evidence" value="ECO:0000315"/>
    <property type="project" value="UniProtKB"/>
</dbReference>
<dbReference type="GO" id="GO:0009306">
    <property type="term" value="P:protein secretion"/>
    <property type="evidence" value="ECO:0000315"/>
    <property type="project" value="FlyBase"/>
</dbReference>
<dbReference type="GO" id="GO:0051231">
    <property type="term" value="P:spindle elongation"/>
    <property type="evidence" value="ECO:0000318"/>
    <property type="project" value="GO_Central"/>
</dbReference>
<dbReference type="CDD" id="cd01364">
    <property type="entry name" value="KISc_BimC_Eg5"/>
    <property type="match status" value="1"/>
</dbReference>
<dbReference type="FunFam" id="3.40.850.10:FF:000035">
    <property type="entry name" value="Kinesin-like protein KIF11"/>
    <property type="match status" value="1"/>
</dbReference>
<dbReference type="Gene3D" id="3.40.850.10">
    <property type="entry name" value="Kinesin motor domain"/>
    <property type="match status" value="1"/>
</dbReference>
<dbReference type="InterPro" id="IPR047149">
    <property type="entry name" value="KIF11-like"/>
</dbReference>
<dbReference type="InterPro" id="IPR047241">
    <property type="entry name" value="KIF11-like_kin_motor_dom"/>
</dbReference>
<dbReference type="InterPro" id="IPR025901">
    <property type="entry name" value="Kinesin-assoc_MT-bd_dom"/>
</dbReference>
<dbReference type="InterPro" id="IPR019821">
    <property type="entry name" value="Kinesin_motor_CS"/>
</dbReference>
<dbReference type="InterPro" id="IPR001752">
    <property type="entry name" value="Kinesin_motor_dom"/>
</dbReference>
<dbReference type="InterPro" id="IPR036961">
    <property type="entry name" value="Kinesin_motor_dom_sf"/>
</dbReference>
<dbReference type="InterPro" id="IPR027417">
    <property type="entry name" value="P-loop_NTPase"/>
</dbReference>
<dbReference type="PANTHER" id="PTHR47970:SF12">
    <property type="entry name" value="KINESIN FAMILY MEMBER 11"/>
    <property type="match status" value="1"/>
</dbReference>
<dbReference type="PANTHER" id="PTHR47970">
    <property type="entry name" value="KINESIN-LIKE PROTEIN KIF11"/>
    <property type="match status" value="1"/>
</dbReference>
<dbReference type="Pfam" id="PF00225">
    <property type="entry name" value="Kinesin"/>
    <property type="match status" value="1"/>
</dbReference>
<dbReference type="Pfam" id="PF13931">
    <property type="entry name" value="Microtub_bind"/>
    <property type="match status" value="1"/>
</dbReference>
<dbReference type="PRINTS" id="PR00380">
    <property type="entry name" value="KINESINHEAVY"/>
</dbReference>
<dbReference type="SMART" id="SM00129">
    <property type="entry name" value="KISc"/>
    <property type="match status" value="1"/>
</dbReference>
<dbReference type="SUPFAM" id="SSF52540">
    <property type="entry name" value="P-loop containing nucleoside triphosphate hydrolases"/>
    <property type="match status" value="1"/>
</dbReference>
<dbReference type="PROSITE" id="PS00411">
    <property type="entry name" value="KINESIN_MOTOR_1"/>
    <property type="match status" value="1"/>
</dbReference>
<dbReference type="PROSITE" id="PS50067">
    <property type="entry name" value="KINESIN_MOTOR_2"/>
    <property type="match status" value="1"/>
</dbReference>